<name>NU1M_TETNG</name>
<reference key="1">
    <citation type="journal article" date="2006" name="DNA Seq.">
        <title>The complete nucleotide sequence of the mitochondrial genome of Tetraodon nigroviridis.</title>
        <authorList>
            <person name="Yue G.H."/>
            <person name="Lo L.C."/>
            <person name="Zhu Z.Y."/>
            <person name="Lin G."/>
            <person name="Feng F."/>
        </authorList>
    </citation>
    <scope>NUCLEOTIDE SEQUENCE [LARGE SCALE GENOMIC DNA]</scope>
</reference>
<feature type="chain" id="PRO_0000117488" description="NADH-ubiquinone oxidoreductase chain 1">
    <location>
        <begin position="1"/>
        <end position="324"/>
    </location>
</feature>
<feature type="transmembrane region" description="Helical" evidence="2">
    <location>
        <begin position="9"/>
        <end position="29"/>
    </location>
</feature>
<feature type="transmembrane region" description="Helical" evidence="2">
    <location>
        <begin position="43"/>
        <end position="63"/>
    </location>
</feature>
<feature type="transmembrane region" description="Helical" evidence="2">
    <location>
        <begin position="75"/>
        <end position="95"/>
    </location>
</feature>
<feature type="transmembrane region" description="Helical" evidence="2">
    <location>
        <begin position="106"/>
        <end position="126"/>
    </location>
</feature>
<feature type="transmembrane region" description="Helical" evidence="2">
    <location>
        <begin position="146"/>
        <end position="166"/>
    </location>
</feature>
<feature type="transmembrane region" description="Helical" evidence="2">
    <location>
        <begin position="177"/>
        <end position="197"/>
    </location>
</feature>
<feature type="transmembrane region" description="Helical" evidence="2">
    <location>
        <begin position="228"/>
        <end position="250"/>
    </location>
</feature>
<feature type="transmembrane region" description="Helical" evidence="2">
    <location>
        <begin position="259"/>
        <end position="279"/>
    </location>
</feature>
<feature type="transmembrane region" description="Helical" evidence="2">
    <location>
        <begin position="299"/>
        <end position="319"/>
    </location>
</feature>
<dbReference type="EC" id="7.1.1.2"/>
<dbReference type="EMBL" id="DQ019313">
    <property type="protein sequence ID" value="AAY26164.1"/>
    <property type="molecule type" value="Genomic_DNA"/>
</dbReference>
<dbReference type="SMR" id="Q4JQI7"/>
<dbReference type="FunCoup" id="Q4JQI7">
    <property type="interactions" value="19"/>
</dbReference>
<dbReference type="STRING" id="99883.ENSTNIP00000007010"/>
<dbReference type="Ensembl" id="ENSTNIT00000007166.1">
    <property type="protein sequence ID" value="ENSTNIP00000007010.1"/>
    <property type="gene ID" value="ENSTNIG00000004376.1"/>
</dbReference>
<dbReference type="GeneTree" id="ENSGT00390000006621"/>
<dbReference type="HOGENOM" id="CLU_015134_0_1_1"/>
<dbReference type="InParanoid" id="Q4JQI7"/>
<dbReference type="OMA" id="WSGWASN"/>
<dbReference type="TreeFam" id="TF352957"/>
<dbReference type="Proteomes" id="UP000007303">
    <property type="component" value="Mitochondrion"/>
</dbReference>
<dbReference type="GO" id="GO:0005743">
    <property type="term" value="C:mitochondrial inner membrane"/>
    <property type="evidence" value="ECO:0007669"/>
    <property type="project" value="UniProtKB-SubCell"/>
</dbReference>
<dbReference type="GO" id="GO:0008137">
    <property type="term" value="F:NADH dehydrogenase (ubiquinone) activity"/>
    <property type="evidence" value="ECO:0007669"/>
    <property type="project" value="UniProtKB-EC"/>
</dbReference>
<dbReference type="GO" id="GO:0009060">
    <property type="term" value="P:aerobic respiration"/>
    <property type="evidence" value="ECO:0007669"/>
    <property type="project" value="TreeGrafter"/>
</dbReference>
<dbReference type="HAMAP" id="MF_01350">
    <property type="entry name" value="NDH1_NuoH"/>
    <property type="match status" value="1"/>
</dbReference>
<dbReference type="InterPro" id="IPR001694">
    <property type="entry name" value="NADH_UbQ_OxRdtase_su1/FPO"/>
</dbReference>
<dbReference type="InterPro" id="IPR018086">
    <property type="entry name" value="NADH_UbQ_OxRdtase_su1_CS"/>
</dbReference>
<dbReference type="PANTHER" id="PTHR11432">
    <property type="entry name" value="NADH DEHYDROGENASE SUBUNIT 1"/>
    <property type="match status" value="1"/>
</dbReference>
<dbReference type="PANTHER" id="PTHR11432:SF3">
    <property type="entry name" value="NADH-UBIQUINONE OXIDOREDUCTASE CHAIN 1"/>
    <property type="match status" value="1"/>
</dbReference>
<dbReference type="Pfam" id="PF00146">
    <property type="entry name" value="NADHdh"/>
    <property type="match status" value="1"/>
</dbReference>
<dbReference type="PROSITE" id="PS00667">
    <property type="entry name" value="COMPLEX1_ND1_1"/>
    <property type="match status" value="1"/>
</dbReference>
<dbReference type="PROSITE" id="PS00668">
    <property type="entry name" value="COMPLEX1_ND1_2"/>
    <property type="match status" value="1"/>
</dbReference>
<evidence type="ECO:0000250" key="1"/>
<evidence type="ECO:0000255" key="2"/>
<evidence type="ECO:0000305" key="3"/>
<sequence length="324" mass="35698">MITTLITHILNPLAFIVPVLLAVAFLTLLERKVLGYMQLRKGPNIVGPYGLLQPIADGVKLFIKEPVRPSTSSPILFILTPMLALTLAMTLWAPLPLPYPVLDLNLAILLFVALSSLAVYSILGSGWASNSKYALVGALRAVAQTISYEVSLGLILLSLIIFTGGFTLQTFNTAQESIWLIIPAWPLAAMWYISTLAETNRAPFDLTEGESELVSGFNVEYAGGPFALFFLAEYANILFMNTLSASLFLGASHIPMLPELTTMNLMTKAAVLSLVFLWVRASYPRFRYDQLMHLIWKNFLPLTLALVIWHLALPITFAGLPPQM</sequence>
<gene>
    <name type="primary">MT-ND1</name>
    <name type="synonym">MTND1</name>
    <name type="synonym">NADH1</name>
    <name type="synonym">ND1</name>
</gene>
<proteinExistence type="inferred from homology"/>
<protein>
    <recommendedName>
        <fullName>NADH-ubiquinone oxidoreductase chain 1</fullName>
        <ecNumber>7.1.1.2</ecNumber>
    </recommendedName>
    <alternativeName>
        <fullName>NADH dehydrogenase subunit 1</fullName>
    </alternativeName>
</protein>
<organism>
    <name type="scientific">Tetraodon nigroviridis</name>
    <name type="common">Spotted green pufferfish</name>
    <name type="synonym">Chelonodon nigroviridis</name>
    <dbReference type="NCBI Taxonomy" id="99883"/>
    <lineage>
        <taxon>Eukaryota</taxon>
        <taxon>Metazoa</taxon>
        <taxon>Chordata</taxon>
        <taxon>Craniata</taxon>
        <taxon>Vertebrata</taxon>
        <taxon>Euteleostomi</taxon>
        <taxon>Actinopterygii</taxon>
        <taxon>Neopterygii</taxon>
        <taxon>Teleostei</taxon>
        <taxon>Neoteleostei</taxon>
        <taxon>Acanthomorphata</taxon>
        <taxon>Eupercaria</taxon>
        <taxon>Tetraodontiformes</taxon>
        <taxon>Tetradontoidea</taxon>
        <taxon>Tetraodontidae</taxon>
        <taxon>Tetraodon</taxon>
    </lineage>
</organism>
<geneLocation type="mitochondrion"/>
<keyword id="KW-0249">Electron transport</keyword>
<keyword id="KW-0472">Membrane</keyword>
<keyword id="KW-0496">Mitochondrion</keyword>
<keyword id="KW-0999">Mitochondrion inner membrane</keyword>
<keyword id="KW-0520">NAD</keyword>
<keyword id="KW-1185">Reference proteome</keyword>
<keyword id="KW-0679">Respiratory chain</keyword>
<keyword id="KW-1278">Translocase</keyword>
<keyword id="KW-0812">Transmembrane</keyword>
<keyword id="KW-1133">Transmembrane helix</keyword>
<keyword id="KW-0813">Transport</keyword>
<keyword id="KW-0830">Ubiquinone</keyword>
<comment type="function">
    <text evidence="1">Core subunit of the mitochondrial membrane respiratory chain NADH dehydrogenase (Complex I) that is believed to belong to the minimal assembly required for catalysis. Complex I functions in the transfer of electrons from NADH to the respiratory chain. The immediate electron acceptor for the enzyme is believed to be ubiquinone (By similarity).</text>
</comment>
<comment type="catalytic activity">
    <reaction>
        <text>a ubiquinone + NADH + 5 H(+)(in) = a ubiquinol + NAD(+) + 4 H(+)(out)</text>
        <dbReference type="Rhea" id="RHEA:29091"/>
        <dbReference type="Rhea" id="RHEA-COMP:9565"/>
        <dbReference type="Rhea" id="RHEA-COMP:9566"/>
        <dbReference type="ChEBI" id="CHEBI:15378"/>
        <dbReference type="ChEBI" id="CHEBI:16389"/>
        <dbReference type="ChEBI" id="CHEBI:17976"/>
        <dbReference type="ChEBI" id="CHEBI:57540"/>
        <dbReference type="ChEBI" id="CHEBI:57945"/>
        <dbReference type="EC" id="7.1.1.2"/>
    </reaction>
</comment>
<comment type="subcellular location">
    <subcellularLocation>
        <location evidence="1">Mitochondrion inner membrane</location>
        <topology evidence="1">Multi-pass membrane protein</topology>
    </subcellularLocation>
</comment>
<comment type="similarity">
    <text evidence="3">Belongs to the complex I subunit 1 family.</text>
</comment>
<accession>Q4JQI7</accession>